<gene>
    <name evidence="1" type="primary">psbJ</name>
</gene>
<comment type="function">
    <text evidence="1 2 3 4 5">One of the components of the core complex of photosystem II (PSII). Essential for PSII function, it may be important for unidirectionality of electron flow (PubMed:11546758, PubMed:12655396, PubMed:14979726) and/or assembly of the oxygen evolving complex (PubMed:11827973). PSII is a light-driven water:plastoquinone oxidoreductase that uses light energy to abstract electrons from H(2)O, generating O(2) and a proton gradient subsequently used for ATP formation. It consists of a core antenna complex that captures photons, and an electron transfer chain that converts photonic excitation into a charge separation.</text>
</comment>
<comment type="subunit">
    <text evidence="1 6">PSII is composed of 1 copy each of membrane proteins PsbA, PsbB, PsbC, PsbD, PsbE, PsbF, PsbH, PsbI, PsbJ, PsbK, PsbL, PsbM, PsbT, PsbX, PsbY, PsbZ, Psb30/Ycf12, at least 3 peripheral proteins of the oxygen-evolving complex and a large number of cofactors. It forms dimeric complexes.</text>
</comment>
<comment type="subcellular location">
    <subcellularLocation>
        <location evidence="1">Plastid</location>
        <location evidence="1">Chloroplast thylakoid membrane</location>
        <topology evidence="1">Single-pass membrane protein</topology>
    </subcellularLocation>
</comment>
<comment type="disruption phenotype">
    <text evidence="2 3 4 5">Able to assemble functional PSII, however electron flow is deregulated; forward flow from Q(A) to plastoquinone is slower while reduction of the oxygen evolving complex is faster, loss of light-activated, redox-dependent phosphorylation of LCHII, plants senesce quickly (PubMed:11546758, PubMed:12655396, PubMed:14979726). Plants are hypersensitive to light, cannot grow photoautotrophically and have drastically reduced oxygen-evolving capacity. Dramatic reduction in PSI subunits, almost complete loss of PsbP, a subunit of the oxygen-evolving complex (PubMed:11827973).</text>
</comment>
<comment type="similarity">
    <text evidence="1">Belongs to the PsbJ family.</text>
</comment>
<geneLocation type="chloroplast"/>
<keyword id="KW-0150">Chloroplast</keyword>
<keyword id="KW-0472">Membrane</keyword>
<keyword id="KW-0602">Photosynthesis</keyword>
<keyword id="KW-0604">Photosystem II</keyword>
<keyword id="KW-0934">Plastid</keyword>
<keyword id="KW-0674">Reaction center</keyword>
<keyword id="KW-1185">Reference proteome</keyword>
<keyword id="KW-0793">Thylakoid</keyword>
<keyword id="KW-0812">Transmembrane</keyword>
<keyword id="KW-1133">Transmembrane helix</keyword>
<organism>
    <name type="scientific">Nicotiana tabacum</name>
    <name type="common">Common tobacco</name>
    <dbReference type="NCBI Taxonomy" id="4097"/>
    <lineage>
        <taxon>Eukaryota</taxon>
        <taxon>Viridiplantae</taxon>
        <taxon>Streptophyta</taxon>
        <taxon>Embryophyta</taxon>
        <taxon>Tracheophyta</taxon>
        <taxon>Spermatophyta</taxon>
        <taxon>Magnoliopsida</taxon>
        <taxon>eudicotyledons</taxon>
        <taxon>Gunneridae</taxon>
        <taxon>Pentapetalae</taxon>
        <taxon>asterids</taxon>
        <taxon>lamiids</taxon>
        <taxon>Solanales</taxon>
        <taxon>Solanaceae</taxon>
        <taxon>Nicotianoideae</taxon>
        <taxon>Nicotianeae</taxon>
        <taxon>Nicotiana</taxon>
    </lineage>
</organism>
<name>PSBJ_TOBAC</name>
<accession>P69692</accession>
<accession>P12190</accession>
<proteinExistence type="evidence at protein level"/>
<reference key="1">
    <citation type="journal article" date="1986" name="EMBO J.">
        <title>The complete nucleotide sequence of the tobacco chloroplast genome: its gene organization and expression.</title>
        <authorList>
            <person name="Shinozaki K."/>
            <person name="Ohme M."/>
            <person name="Tanaka M."/>
            <person name="Wakasugi T."/>
            <person name="Hayashida N."/>
            <person name="Matsubayashi T."/>
            <person name="Zaita N."/>
            <person name="Chunwongse J."/>
            <person name="Obokata J."/>
            <person name="Yamaguchi-Shinozaki K."/>
            <person name="Ohto C."/>
            <person name="Torazawa K."/>
            <person name="Meng B.-Y."/>
            <person name="Sugita M."/>
            <person name="Deno H."/>
            <person name="Kamogashira T."/>
            <person name="Yamada K."/>
            <person name="Kusuda J."/>
            <person name="Takaiwa F."/>
            <person name="Kato A."/>
            <person name="Tohdoh N."/>
            <person name="Shimada H."/>
            <person name="Sugiura M."/>
        </authorList>
    </citation>
    <scope>NUCLEOTIDE SEQUENCE [LARGE SCALE GENOMIC DNA]</scope>
    <source>
        <strain>cv. Bright Yellow 4</strain>
    </source>
</reference>
<reference key="2">
    <citation type="journal article" date="2001" name="J. Biol. Chem.">
        <title>Deregulation of electron flow within photosystem II in the absence of the PsbJ protein.</title>
        <authorList>
            <person name="Regel R.E."/>
            <person name="Ivleva N.B."/>
            <person name="Zer H."/>
            <person name="Meurer J."/>
            <person name="Shestakov S.V."/>
            <person name="Herrmann R.G."/>
            <person name="Pakrasi H.B."/>
            <person name="Ohad I."/>
        </authorList>
    </citation>
    <scope>FUNCTION</scope>
    <scope>DISRUPTION PHENOTYPE</scope>
    <source>
        <strain>cv. Petit Havana</strain>
    </source>
</reference>
<reference key="3">
    <citation type="journal article" date="2002" name="J. Biol. Chem.">
        <title>Lack of the small plastid-encoded PsbJ polypeptide results in a defective water-splitting apparatus of photosystem II, reduced photosystem I levels, and hypersensitivity to light.</title>
        <authorList>
            <person name="Hager M."/>
            <person name="Hermann M."/>
            <person name="Biehler K."/>
            <person name="Krieger-Liszkay A."/>
            <person name="Bock R."/>
        </authorList>
    </citation>
    <scope>FUNCTION</scope>
    <scope>SUBUNIT</scope>
    <scope>DISRUPTION PHENOTYPE</scope>
    <source>
        <strain>cv. Petit Havana</strain>
    </source>
</reference>
<reference key="4">
    <citation type="journal article" date="2003" name="Mol. Genet. Genomics">
        <title>Effects of selective inactivation of individual genes for low-molecular-mass subunits on the assembly of photosystem II, as revealed by chloroplast transformation: the psbEFLJoperon in Nicotiana tabacum.</title>
        <authorList>
            <person name="Swiatek M."/>
            <person name="Regel R.E."/>
            <person name="Meurer J."/>
            <person name="Wanner G."/>
            <person name="Pakrasi H.B."/>
            <person name="Ohad I."/>
            <person name="Herrmann R.G."/>
        </authorList>
    </citation>
    <scope>FUNCTION</scope>
    <scope>DISRUPTION PHENOTYPE</scope>
    <source>
        <strain>cv. Petit Havana</strain>
    </source>
</reference>
<reference key="5">
    <citation type="journal article" date="2004" name="Biochemistry">
        <title>Photosystem II proteins PsbL and PsbJ regulate electron flow to the plastoquinone pool.</title>
        <authorList>
            <person name="Ohad I."/>
            <person name="Dal Bosco C."/>
            <person name="Herrmann R.G."/>
            <person name="Meurer J."/>
        </authorList>
    </citation>
    <scope>FUNCTION</scope>
    <scope>DISRUPTION PHENOTYPE</scope>
    <source>
        <strain>cv. Petit Havana</strain>
    </source>
</reference>
<protein>
    <recommendedName>
        <fullName evidence="1">Photosystem II reaction center protein J</fullName>
        <shortName evidence="1">PSII-J</shortName>
    </recommendedName>
</protein>
<feature type="chain" id="PRO_0000216620" description="Photosystem II reaction center protein J">
    <location>
        <begin position="1"/>
        <end position="40"/>
    </location>
</feature>
<feature type="transmembrane region" description="Helical" evidence="1">
    <location>
        <begin position="8"/>
        <end position="28"/>
    </location>
</feature>
<evidence type="ECO:0000255" key="1">
    <source>
        <dbReference type="HAMAP-Rule" id="MF_01305"/>
    </source>
</evidence>
<evidence type="ECO:0000269" key="2">
    <source>
    </source>
</evidence>
<evidence type="ECO:0000269" key="3">
    <source>
    </source>
</evidence>
<evidence type="ECO:0000269" key="4">
    <source>
    </source>
</evidence>
<evidence type="ECO:0000269" key="5">
    <source>
    </source>
</evidence>
<evidence type="ECO:0000305" key="6">
    <source>
    </source>
</evidence>
<sequence>MADTTGRIPLWIIGTVAGILVIGLIGIFFYGSYSGLGSSL</sequence>
<dbReference type="EMBL" id="Z00044">
    <property type="protein sequence ID" value="CAA77417.1"/>
    <property type="molecule type" value="Genomic_DNA"/>
</dbReference>
<dbReference type="PIR" id="S05686">
    <property type="entry name" value="S05686"/>
</dbReference>
<dbReference type="RefSeq" id="NP_054514.1">
    <property type="nucleotide sequence ID" value="NC_001879.2"/>
</dbReference>
<dbReference type="SMR" id="P69692"/>
<dbReference type="GeneID" id="800496"/>
<dbReference type="KEGG" id="nta:800496"/>
<dbReference type="Proteomes" id="UP000084051">
    <property type="component" value="Unplaced"/>
</dbReference>
<dbReference type="GO" id="GO:0009535">
    <property type="term" value="C:chloroplast thylakoid membrane"/>
    <property type="evidence" value="ECO:0007669"/>
    <property type="project" value="UniProtKB-SubCell"/>
</dbReference>
<dbReference type="GO" id="GO:0009539">
    <property type="term" value="C:photosystem II reaction center"/>
    <property type="evidence" value="ECO:0007669"/>
    <property type="project" value="InterPro"/>
</dbReference>
<dbReference type="GO" id="GO:0015979">
    <property type="term" value="P:photosynthesis"/>
    <property type="evidence" value="ECO:0007669"/>
    <property type="project" value="UniProtKB-UniRule"/>
</dbReference>
<dbReference type="Gene3D" id="6.10.250.2070">
    <property type="match status" value="1"/>
</dbReference>
<dbReference type="HAMAP" id="MF_01305">
    <property type="entry name" value="PSII_PsbJ"/>
    <property type="match status" value="1"/>
</dbReference>
<dbReference type="InterPro" id="IPR002682">
    <property type="entry name" value="PSII_PsbJ"/>
</dbReference>
<dbReference type="InterPro" id="IPR037267">
    <property type="entry name" value="PSII_PsbJ_sf"/>
</dbReference>
<dbReference type="NCBIfam" id="NF002722">
    <property type="entry name" value="PRK02565.1"/>
    <property type="match status" value="1"/>
</dbReference>
<dbReference type="PANTHER" id="PTHR34812">
    <property type="entry name" value="PHOTOSYSTEM II REACTION CENTER PROTEIN J"/>
    <property type="match status" value="1"/>
</dbReference>
<dbReference type="PANTHER" id="PTHR34812:SF3">
    <property type="entry name" value="PHOTOSYSTEM II REACTION CENTER PROTEIN J"/>
    <property type="match status" value="1"/>
</dbReference>
<dbReference type="Pfam" id="PF01788">
    <property type="entry name" value="PsbJ"/>
    <property type="match status" value="1"/>
</dbReference>
<dbReference type="SUPFAM" id="SSF161021">
    <property type="entry name" value="Photosystem II reaction center protein J, PsbJ"/>
    <property type="match status" value="1"/>
</dbReference>